<sequence length="560" mass="60634">MDFMKVFDQTVREIKREVNLKVLKVPEMEQKVLDATDNEPWGPHGTALAEIAQATKKFSECQMVMSVLWTRLSETGKDWRYVYKALAVIDYLISNGSERAVDEIIEHTYQISSLTSFEYVEPNGKDVGINVRKKAENIVALLNNKEKISEIRDKAVANRNKYVGLSSTGITYKSGSSASFGGSFQSGSSNFDSYKDRDSREDKNDYESFQKSRRGVKTEEQSYTSKKSFSRYGSTDHDNLSSGKKSPDSAKHRSYVSAAPSNNDDDFDDFDPRGTSSNKPSTGSANQVDLFGGDLIGDFLDSGPTETSSTNNNENFQEADLFADAAFVSASAQGAEFGSQTQKQVDLFSASEPSVTVSSAPPTVDLFASSESVVSPEAKISIPESMATPNIVDPFAAVPMDNFDGSDPFGAFTSHSASVSTGPQAPSVHGSATNTTSPLSFADSKPQHLQKKDPFQVKSGIWADSLSRGLIDLNITAPKKASLADVGVVGDLSNEDGNKASAASYYSGWSMGAGSGLGKTGLYSTQQQQQQQQQQQAPDISDDFFSSLSNQRYQSGGFKQ</sequence>
<keyword id="KW-0963">Cytoplasm</keyword>
<keyword id="KW-0968">Cytoplasmic vesicle</keyword>
<keyword id="KW-0206">Cytoskeleton</keyword>
<keyword id="KW-0333">Golgi apparatus</keyword>
<keyword id="KW-0653">Protein transport</keyword>
<keyword id="KW-1185">Reference proteome</keyword>
<keyword id="KW-0813">Transport</keyword>
<dbReference type="EMBL" id="AL163814">
    <property type="protein sequence ID" value="CAB87689.1"/>
    <property type="status" value="ALT_SEQ"/>
    <property type="molecule type" value="Genomic_DNA"/>
</dbReference>
<dbReference type="EMBL" id="CP002688">
    <property type="protein sequence ID" value="AED91713.1"/>
    <property type="molecule type" value="Genomic_DNA"/>
</dbReference>
<dbReference type="EMBL" id="CP002688">
    <property type="protein sequence ID" value="ANM70266.1"/>
    <property type="molecule type" value="Genomic_DNA"/>
</dbReference>
<dbReference type="EMBL" id="CP002688">
    <property type="protein sequence ID" value="ANM70267.1"/>
    <property type="molecule type" value="Genomic_DNA"/>
</dbReference>
<dbReference type="EMBL" id="AY074304">
    <property type="protein sequence ID" value="AAL67001.1"/>
    <property type="molecule type" value="mRNA"/>
</dbReference>
<dbReference type="EMBL" id="AY096605">
    <property type="protein sequence ID" value="AAM20255.1"/>
    <property type="molecule type" value="mRNA"/>
</dbReference>
<dbReference type="EMBL" id="AK227905">
    <property type="protein sequence ID" value="BAE99875.1"/>
    <property type="molecule type" value="mRNA"/>
</dbReference>
<dbReference type="EMBL" id="AK230200">
    <property type="protein sequence ID" value="BAF02008.1"/>
    <property type="molecule type" value="mRNA"/>
</dbReference>
<dbReference type="PIR" id="T48530">
    <property type="entry name" value="T48530"/>
</dbReference>
<dbReference type="RefSeq" id="NP_001318545.1">
    <property type="nucleotide sequence ID" value="NM_001343211.1"/>
</dbReference>
<dbReference type="RefSeq" id="NP_001331892.1">
    <property type="nucleotide sequence ID" value="NM_001343212.1"/>
</dbReference>
<dbReference type="RefSeq" id="NP_196732.2">
    <property type="nucleotide sequence ID" value="NM_121209.6"/>
</dbReference>
<dbReference type="SMR" id="Q8VY07"/>
<dbReference type="BioGRID" id="16321">
    <property type="interactions" value="5"/>
</dbReference>
<dbReference type="FunCoup" id="Q8VY07">
    <property type="interactions" value="2808"/>
</dbReference>
<dbReference type="IntAct" id="Q8VY07">
    <property type="interactions" value="6"/>
</dbReference>
<dbReference type="STRING" id="3702.Q8VY07"/>
<dbReference type="iPTMnet" id="Q8VY07"/>
<dbReference type="PaxDb" id="3702-AT5G11710.1"/>
<dbReference type="ProteomicsDB" id="220776"/>
<dbReference type="EnsemblPlants" id="AT5G11710.1">
    <property type="protein sequence ID" value="AT5G11710.1"/>
    <property type="gene ID" value="AT5G11710"/>
</dbReference>
<dbReference type="EnsemblPlants" id="AT5G11710.2">
    <property type="protein sequence ID" value="AT5G11710.2"/>
    <property type="gene ID" value="AT5G11710"/>
</dbReference>
<dbReference type="EnsemblPlants" id="AT5G11710.3">
    <property type="protein sequence ID" value="AT5G11710.3"/>
    <property type="gene ID" value="AT5G11710"/>
</dbReference>
<dbReference type="GeneID" id="831043"/>
<dbReference type="Gramene" id="AT5G11710.1">
    <property type="protein sequence ID" value="AT5G11710.1"/>
    <property type="gene ID" value="AT5G11710"/>
</dbReference>
<dbReference type="Gramene" id="AT5G11710.2">
    <property type="protein sequence ID" value="AT5G11710.2"/>
    <property type="gene ID" value="AT5G11710"/>
</dbReference>
<dbReference type="Gramene" id="AT5G11710.3">
    <property type="protein sequence ID" value="AT5G11710.3"/>
    <property type="gene ID" value="AT5G11710"/>
</dbReference>
<dbReference type="KEGG" id="ath:AT5G11710"/>
<dbReference type="Araport" id="AT5G11710"/>
<dbReference type="TAIR" id="AT5G11710">
    <property type="gene designation" value="EPS1"/>
</dbReference>
<dbReference type="eggNOG" id="KOG2056">
    <property type="taxonomic scope" value="Eukaryota"/>
</dbReference>
<dbReference type="HOGENOM" id="CLU_037572_0_0_1"/>
<dbReference type="InParanoid" id="Q8VY07"/>
<dbReference type="OMA" id="WRQIYKG"/>
<dbReference type="PhylomeDB" id="Q8VY07"/>
<dbReference type="PRO" id="PR:Q8VY07"/>
<dbReference type="Proteomes" id="UP000006548">
    <property type="component" value="Chromosome 5"/>
</dbReference>
<dbReference type="ExpressionAtlas" id="Q8VY07">
    <property type="expression patterns" value="baseline and differential"/>
</dbReference>
<dbReference type="GO" id="GO:0005884">
    <property type="term" value="C:actin filament"/>
    <property type="evidence" value="ECO:0000314"/>
    <property type="project" value="TAIR"/>
</dbReference>
<dbReference type="GO" id="GO:0030136">
    <property type="term" value="C:clathrin-coated vesicle"/>
    <property type="evidence" value="ECO:0007669"/>
    <property type="project" value="UniProtKB-SubCell"/>
</dbReference>
<dbReference type="GO" id="GO:0005768">
    <property type="term" value="C:endosome"/>
    <property type="evidence" value="ECO:0000314"/>
    <property type="project" value="TAIR"/>
</dbReference>
<dbReference type="GO" id="GO:0005794">
    <property type="term" value="C:Golgi apparatus"/>
    <property type="evidence" value="ECO:0000314"/>
    <property type="project" value="TAIR"/>
</dbReference>
<dbReference type="GO" id="GO:0009579">
    <property type="term" value="C:thylakoid"/>
    <property type="evidence" value="ECO:0007005"/>
    <property type="project" value="TAIR"/>
</dbReference>
<dbReference type="GO" id="GO:0005802">
    <property type="term" value="C:trans-Golgi network"/>
    <property type="evidence" value="ECO:0000314"/>
    <property type="project" value="TAIR"/>
</dbReference>
<dbReference type="GO" id="GO:0030276">
    <property type="term" value="F:clathrin binding"/>
    <property type="evidence" value="ECO:0000314"/>
    <property type="project" value="UniProtKB"/>
</dbReference>
<dbReference type="GO" id="GO:0002020">
    <property type="term" value="F:protease binding"/>
    <property type="evidence" value="ECO:0000353"/>
    <property type="project" value="UniProtKB"/>
</dbReference>
<dbReference type="GO" id="GO:0072659">
    <property type="term" value="P:protein localization to plasma membrane"/>
    <property type="evidence" value="ECO:0000315"/>
    <property type="project" value="TAIR"/>
</dbReference>
<dbReference type="GO" id="GO:0006623">
    <property type="term" value="P:protein targeting to vacuole"/>
    <property type="evidence" value="ECO:0000315"/>
    <property type="project" value="TAIR"/>
</dbReference>
<dbReference type="CDD" id="cd03571">
    <property type="entry name" value="ENTH"/>
    <property type="match status" value="1"/>
</dbReference>
<dbReference type="FunFam" id="1.25.40.90:FF:000006">
    <property type="entry name" value="Clathrin interactor 1"/>
    <property type="match status" value="1"/>
</dbReference>
<dbReference type="Gene3D" id="1.25.40.90">
    <property type="match status" value="1"/>
</dbReference>
<dbReference type="InterPro" id="IPR013809">
    <property type="entry name" value="ENTH"/>
</dbReference>
<dbReference type="InterPro" id="IPR008942">
    <property type="entry name" value="ENTH_VHS"/>
</dbReference>
<dbReference type="PANTHER" id="PTHR12276:SF45">
    <property type="entry name" value="CLATHRIN INTERACTOR 1"/>
    <property type="match status" value="1"/>
</dbReference>
<dbReference type="PANTHER" id="PTHR12276">
    <property type="entry name" value="EPSIN/ENT-RELATED"/>
    <property type="match status" value="1"/>
</dbReference>
<dbReference type="Pfam" id="PF01417">
    <property type="entry name" value="ENTH"/>
    <property type="match status" value="1"/>
</dbReference>
<dbReference type="SMART" id="SM00273">
    <property type="entry name" value="ENTH"/>
    <property type="match status" value="1"/>
</dbReference>
<dbReference type="SUPFAM" id="SSF48464">
    <property type="entry name" value="ENTH/VHS domain"/>
    <property type="match status" value="1"/>
</dbReference>
<dbReference type="PROSITE" id="PS50942">
    <property type="entry name" value="ENTH"/>
    <property type="match status" value="1"/>
</dbReference>
<evidence type="ECO:0000250" key="1"/>
<evidence type="ECO:0000255" key="2">
    <source>
        <dbReference type="PROSITE-ProRule" id="PRU00243"/>
    </source>
</evidence>
<evidence type="ECO:0000256" key="3">
    <source>
        <dbReference type="SAM" id="MobiDB-lite"/>
    </source>
</evidence>
<evidence type="ECO:0000269" key="4">
    <source>
    </source>
</evidence>
<evidence type="ECO:0000269" key="5">
    <source>
    </source>
</evidence>
<evidence type="ECO:0000305" key="6"/>
<gene>
    <name type="primary">EPSIN1</name>
    <name type="synonym">EPSINR1</name>
    <name type="ordered locus">At5g11710</name>
    <name type="ORF">T22P22.100</name>
</gene>
<feature type="chain" id="PRO_0000397861" description="Clathrin interactor EPSIN 1">
    <location>
        <begin position="1"/>
        <end position="560"/>
    </location>
</feature>
<feature type="domain" description="ENTH" evidence="2">
    <location>
        <begin position="20"/>
        <end position="152"/>
    </location>
</feature>
<feature type="region of interest" description="Disordered" evidence="3">
    <location>
        <begin position="190"/>
        <end position="288"/>
    </location>
</feature>
<feature type="region of interest" description="Disordered" evidence="3">
    <location>
        <begin position="414"/>
        <end position="453"/>
    </location>
</feature>
<feature type="region of interest" description="Disordered" evidence="3">
    <location>
        <begin position="517"/>
        <end position="560"/>
    </location>
</feature>
<feature type="short sequence motif" description="Clathrin binding" evidence="1">
    <location>
        <begin position="296"/>
        <end position="300"/>
    </location>
</feature>
<feature type="short sequence motif" description="ALPHA-ADR binding" evidence="1">
    <location>
        <begin position="320"/>
        <end position="322"/>
    </location>
</feature>
<feature type="compositionally biased region" description="Basic and acidic residues" evidence="3">
    <location>
        <begin position="193"/>
        <end position="220"/>
    </location>
</feature>
<feature type="compositionally biased region" description="Polar residues" evidence="3">
    <location>
        <begin position="221"/>
        <end position="233"/>
    </location>
</feature>
<feature type="compositionally biased region" description="Basic and acidic residues" evidence="3">
    <location>
        <begin position="234"/>
        <end position="251"/>
    </location>
</feature>
<feature type="compositionally biased region" description="Polar residues" evidence="3">
    <location>
        <begin position="274"/>
        <end position="287"/>
    </location>
</feature>
<feature type="compositionally biased region" description="Polar residues" evidence="3">
    <location>
        <begin position="414"/>
        <end position="439"/>
    </location>
</feature>
<feature type="compositionally biased region" description="Low complexity" evidence="3">
    <location>
        <begin position="526"/>
        <end position="536"/>
    </location>
</feature>
<feature type="compositionally biased region" description="Polar residues" evidence="3">
    <location>
        <begin position="544"/>
        <end position="554"/>
    </location>
</feature>
<feature type="sequence conflict" description="In Ref. 4; BAF02008." evidence="6" ref="4">
    <original>N</original>
    <variation>D</variation>
    <location>
        <position position="311"/>
    </location>
</feature>
<protein>
    <recommendedName>
        <fullName>Clathrin interactor EPSIN 1</fullName>
    </recommendedName>
    <alternativeName>
        <fullName>EPSIN-related 1</fullName>
    </alternativeName>
</protein>
<comment type="function">
    <text evidence="1 4">May have a role in transport via clathrin-coated vesicles from the trans-Golgi network to endosomes. Stimulates clathrin assembly (By similarity). Does not seem to bind to phospholipids. Plays an important role in the vacuolar trafficking of soluble cargo proteins at the trans-Golgi network.</text>
</comment>
<comment type="subunit">
    <text evidence="4 5">Interacts with clathrin, VTI11, GAMMA-ADR and VSR1. Binds to the deubiquitinating enzyme AMSH3.</text>
</comment>
<comment type="interaction">
    <interactant intactId="EBI-1162785">
        <id>Q8VY07</id>
    </interactant>
    <interactant intactId="EBI-1162845">
        <id>Q0WNJ6</id>
        <label>CHC1</label>
    </interactant>
    <organismsDiffer>false</organismsDiffer>
    <experiments>3</experiments>
</comment>
<comment type="interaction">
    <interactant intactId="EBI-1162785">
        <id>Q8VY07</id>
    </interactant>
    <interactant intactId="EBI-1163115">
        <id>Q84K16</id>
        <label>GAMMA-ADR</label>
    </interactant>
    <organismsDiffer>false</organismsDiffer>
    <experiments>2</experiments>
</comment>
<comment type="interaction">
    <interactant intactId="EBI-1162785">
        <id>Q8VY07</id>
    </interactant>
    <interactant intactId="EBI-1163008">
        <id>P93026</id>
        <label>VSR1</label>
    </interactant>
    <organismsDiffer>false</organismsDiffer>
    <experiments>2</experiments>
</comment>
<comment type="interaction">
    <interactant intactId="EBI-1162785">
        <id>Q8VY07</id>
    </interactant>
    <interactant intactId="EBI-1162795">
        <id>Q9SEL6</id>
        <label>VTI11</label>
    </interactant>
    <organismsDiffer>false</organismsDiffer>
    <experiments>3</experiments>
</comment>
<comment type="subcellular location">
    <subcellularLocation>
        <location evidence="4">Golgi apparatus</location>
    </subcellularLocation>
    <subcellularLocation>
        <location evidence="4">Prevacuolar compartment</location>
    </subcellularLocation>
    <subcellularLocation>
        <location evidence="4">Cytoplasm</location>
    </subcellularLocation>
    <subcellularLocation>
        <location evidence="1">Cytoplasmic vesicle</location>
        <location evidence="1">Clathrin-coated vesicle</location>
    </subcellularLocation>
    <subcellularLocation>
        <location evidence="4">Cytoplasm</location>
        <location evidence="4">Cytoskeleton</location>
    </subcellularLocation>
    <text>Associated with actin filaments.</text>
</comment>
<comment type="tissue specificity">
    <text evidence="4">Mostly expressed in cotyledons and flowers, and, to a lower extent, in roots, leaves and siliques (at protein level).</text>
</comment>
<comment type="disruption phenotype">
    <text evidence="4">Defect in vacuolar trafficking.</text>
</comment>
<comment type="similarity">
    <text evidence="6">Belongs to the epsin family.</text>
</comment>
<comment type="sequence caution" evidence="6">
    <conflict type="erroneous gene model prediction">
        <sequence resource="EMBL-CDS" id="CAB87689"/>
    </conflict>
</comment>
<name>EPN1_ARATH</name>
<proteinExistence type="evidence at protein level"/>
<accession>Q8VY07</accession>
<accession>Q0WLJ9</accession>
<accession>Q9LYF9</accession>
<organism>
    <name type="scientific">Arabidopsis thaliana</name>
    <name type="common">Mouse-ear cress</name>
    <dbReference type="NCBI Taxonomy" id="3702"/>
    <lineage>
        <taxon>Eukaryota</taxon>
        <taxon>Viridiplantae</taxon>
        <taxon>Streptophyta</taxon>
        <taxon>Embryophyta</taxon>
        <taxon>Tracheophyta</taxon>
        <taxon>Spermatophyta</taxon>
        <taxon>Magnoliopsida</taxon>
        <taxon>eudicotyledons</taxon>
        <taxon>Gunneridae</taxon>
        <taxon>Pentapetalae</taxon>
        <taxon>rosids</taxon>
        <taxon>malvids</taxon>
        <taxon>Brassicales</taxon>
        <taxon>Brassicaceae</taxon>
        <taxon>Camelineae</taxon>
        <taxon>Arabidopsis</taxon>
    </lineage>
</organism>
<reference key="1">
    <citation type="journal article" date="2000" name="Nature">
        <title>Sequence and analysis of chromosome 5 of the plant Arabidopsis thaliana.</title>
        <authorList>
            <person name="Tabata S."/>
            <person name="Kaneko T."/>
            <person name="Nakamura Y."/>
            <person name="Kotani H."/>
            <person name="Kato T."/>
            <person name="Asamizu E."/>
            <person name="Miyajima N."/>
            <person name="Sasamoto S."/>
            <person name="Kimura T."/>
            <person name="Hosouchi T."/>
            <person name="Kawashima K."/>
            <person name="Kohara M."/>
            <person name="Matsumoto M."/>
            <person name="Matsuno A."/>
            <person name="Muraki A."/>
            <person name="Nakayama S."/>
            <person name="Nakazaki N."/>
            <person name="Naruo K."/>
            <person name="Okumura S."/>
            <person name="Shinpo S."/>
            <person name="Takeuchi C."/>
            <person name="Wada T."/>
            <person name="Watanabe A."/>
            <person name="Yamada M."/>
            <person name="Yasuda M."/>
            <person name="Sato S."/>
            <person name="de la Bastide M."/>
            <person name="Huang E."/>
            <person name="Spiegel L."/>
            <person name="Gnoj L."/>
            <person name="O'Shaughnessy A."/>
            <person name="Preston R."/>
            <person name="Habermann K."/>
            <person name="Murray J."/>
            <person name="Johnson D."/>
            <person name="Rohlfing T."/>
            <person name="Nelson J."/>
            <person name="Stoneking T."/>
            <person name="Pepin K."/>
            <person name="Spieth J."/>
            <person name="Sekhon M."/>
            <person name="Armstrong J."/>
            <person name="Becker M."/>
            <person name="Belter E."/>
            <person name="Cordum H."/>
            <person name="Cordes M."/>
            <person name="Courtney L."/>
            <person name="Courtney W."/>
            <person name="Dante M."/>
            <person name="Du H."/>
            <person name="Edwards J."/>
            <person name="Fryman J."/>
            <person name="Haakensen B."/>
            <person name="Lamar E."/>
            <person name="Latreille P."/>
            <person name="Leonard S."/>
            <person name="Meyer R."/>
            <person name="Mulvaney E."/>
            <person name="Ozersky P."/>
            <person name="Riley A."/>
            <person name="Strowmatt C."/>
            <person name="Wagner-McPherson C."/>
            <person name="Wollam A."/>
            <person name="Yoakum M."/>
            <person name="Bell M."/>
            <person name="Dedhia N."/>
            <person name="Parnell L."/>
            <person name="Shah R."/>
            <person name="Rodriguez M."/>
            <person name="Hoon See L."/>
            <person name="Vil D."/>
            <person name="Baker J."/>
            <person name="Kirchoff K."/>
            <person name="Toth K."/>
            <person name="King L."/>
            <person name="Bahret A."/>
            <person name="Miller B."/>
            <person name="Marra M.A."/>
            <person name="Martienssen R."/>
            <person name="McCombie W.R."/>
            <person name="Wilson R.K."/>
            <person name="Murphy G."/>
            <person name="Bancroft I."/>
            <person name="Volckaert G."/>
            <person name="Wambutt R."/>
            <person name="Duesterhoeft A."/>
            <person name="Stiekema W."/>
            <person name="Pohl T."/>
            <person name="Entian K.-D."/>
            <person name="Terryn N."/>
            <person name="Hartley N."/>
            <person name="Bent E."/>
            <person name="Johnson S."/>
            <person name="Langham S.-A."/>
            <person name="McCullagh B."/>
            <person name="Robben J."/>
            <person name="Grymonprez B."/>
            <person name="Zimmermann W."/>
            <person name="Ramsperger U."/>
            <person name="Wedler H."/>
            <person name="Balke K."/>
            <person name="Wedler E."/>
            <person name="Peters S."/>
            <person name="van Staveren M."/>
            <person name="Dirkse W."/>
            <person name="Mooijman P."/>
            <person name="Klein Lankhorst R."/>
            <person name="Weitzenegger T."/>
            <person name="Bothe G."/>
            <person name="Rose M."/>
            <person name="Hauf J."/>
            <person name="Berneiser S."/>
            <person name="Hempel S."/>
            <person name="Feldpausch M."/>
            <person name="Lamberth S."/>
            <person name="Villarroel R."/>
            <person name="Gielen J."/>
            <person name="Ardiles W."/>
            <person name="Bents O."/>
            <person name="Lemcke K."/>
            <person name="Kolesov G."/>
            <person name="Mayer K.F.X."/>
            <person name="Rudd S."/>
            <person name="Schoof H."/>
            <person name="Schueller C."/>
            <person name="Zaccaria P."/>
            <person name="Mewes H.-W."/>
            <person name="Bevan M."/>
            <person name="Fransz P.F."/>
        </authorList>
    </citation>
    <scope>NUCLEOTIDE SEQUENCE [LARGE SCALE GENOMIC DNA]</scope>
    <source>
        <strain>cv. Columbia</strain>
    </source>
</reference>
<reference key="2">
    <citation type="journal article" date="2017" name="Plant J.">
        <title>Araport11: a complete reannotation of the Arabidopsis thaliana reference genome.</title>
        <authorList>
            <person name="Cheng C.Y."/>
            <person name="Krishnakumar V."/>
            <person name="Chan A.P."/>
            <person name="Thibaud-Nissen F."/>
            <person name="Schobel S."/>
            <person name="Town C.D."/>
        </authorList>
    </citation>
    <scope>GENOME REANNOTATION</scope>
    <source>
        <strain>cv. Columbia</strain>
    </source>
</reference>
<reference key="3">
    <citation type="journal article" date="2003" name="Science">
        <title>Empirical analysis of transcriptional activity in the Arabidopsis genome.</title>
        <authorList>
            <person name="Yamada K."/>
            <person name="Lim J."/>
            <person name="Dale J.M."/>
            <person name="Chen H."/>
            <person name="Shinn P."/>
            <person name="Palm C.J."/>
            <person name="Southwick A.M."/>
            <person name="Wu H.C."/>
            <person name="Kim C.J."/>
            <person name="Nguyen M."/>
            <person name="Pham P.K."/>
            <person name="Cheuk R.F."/>
            <person name="Karlin-Newmann G."/>
            <person name="Liu S.X."/>
            <person name="Lam B."/>
            <person name="Sakano H."/>
            <person name="Wu T."/>
            <person name="Yu G."/>
            <person name="Miranda M."/>
            <person name="Quach H.L."/>
            <person name="Tripp M."/>
            <person name="Chang C.H."/>
            <person name="Lee J.M."/>
            <person name="Toriumi M.J."/>
            <person name="Chan M.M."/>
            <person name="Tang C.C."/>
            <person name="Onodera C.S."/>
            <person name="Deng J.M."/>
            <person name="Akiyama K."/>
            <person name="Ansari Y."/>
            <person name="Arakawa T."/>
            <person name="Banh J."/>
            <person name="Banno F."/>
            <person name="Bowser L."/>
            <person name="Brooks S.Y."/>
            <person name="Carninci P."/>
            <person name="Chao Q."/>
            <person name="Choy N."/>
            <person name="Enju A."/>
            <person name="Goldsmith A.D."/>
            <person name="Gurjal M."/>
            <person name="Hansen N.F."/>
            <person name="Hayashizaki Y."/>
            <person name="Johnson-Hopson C."/>
            <person name="Hsuan V.W."/>
            <person name="Iida K."/>
            <person name="Karnes M."/>
            <person name="Khan S."/>
            <person name="Koesema E."/>
            <person name="Ishida J."/>
            <person name="Jiang P.X."/>
            <person name="Jones T."/>
            <person name="Kawai J."/>
            <person name="Kamiya A."/>
            <person name="Meyers C."/>
            <person name="Nakajima M."/>
            <person name="Narusaka M."/>
            <person name="Seki M."/>
            <person name="Sakurai T."/>
            <person name="Satou M."/>
            <person name="Tamse R."/>
            <person name="Vaysberg M."/>
            <person name="Wallender E.K."/>
            <person name="Wong C."/>
            <person name="Yamamura Y."/>
            <person name="Yuan S."/>
            <person name="Shinozaki K."/>
            <person name="Davis R.W."/>
            <person name="Theologis A."/>
            <person name="Ecker J.R."/>
        </authorList>
    </citation>
    <scope>NUCLEOTIDE SEQUENCE [LARGE SCALE MRNA]</scope>
    <source>
        <strain>cv. Columbia</strain>
    </source>
</reference>
<reference key="4">
    <citation type="submission" date="2006-07" db="EMBL/GenBank/DDBJ databases">
        <title>Large-scale analysis of RIKEN Arabidopsis full-length (RAFL) cDNAs.</title>
        <authorList>
            <person name="Totoki Y."/>
            <person name="Seki M."/>
            <person name="Ishida J."/>
            <person name="Nakajima M."/>
            <person name="Enju A."/>
            <person name="Kamiya A."/>
            <person name="Narusaka M."/>
            <person name="Shin-i T."/>
            <person name="Nakagawa M."/>
            <person name="Sakamoto N."/>
            <person name="Oishi K."/>
            <person name="Kohara Y."/>
            <person name="Kobayashi M."/>
            <person name="Toyoda A."/>
            <person name="Sakaki Y."/>
            <person name="Sakurai T."/>
            <person name="Iida K."/>
            <person name="Akiyama K."/>
            <person name="Satou M."/>
            <person name="Toyoda T."/>
            <person name="Konagaya A."/>
            <person name="Carninci P."/>
            <person name="Kawai J."/>
            <person name="Hayashizaki Y."/>
            <person name="Shinozaki K."/>
        </authorList>
    </citation>
    <scope>NUCLEOTIDE SEQUENCE [LARGE SCALE MRNA]</scope>
    <source>
        <strain>cv. Columbia</strain>
    </source>
</reference>
<reference key="5">
    <citation type="journal article" date="2005" name="Protoplasma">
        <title>Sequence analysis of Arabidopsis thaliana E/ANTH-domain-containing proteins: membrane tethers of the clathrin-dependent vesicle budding machinery.</title>
        <authorList>
            <person name="Holstein S.E."/>
            <person name="Oliviusson P."/>
        </authorList>
    </citation>
    <scope>GENE FAMILY</scope>
</reference>
<reference key="6">
    <citation type="journal article" date="2006" name="Plant Cell">
        <title>Arabidopsis EPSIN1 plays an important role in vacuolar trafficking of soluble cargo proteins in plant cells via interactions with clathrin, AP-1, VTI11, and VSR1.</title>
        <authorList>
            <person name="Song J."/>
            <person name="Lee M.H."/>
            <person name="Lee G.-J."/>
            <person name="Yoo C.M."/>
            <person name="Hwang I."/>
        </authorList>
    </citation>
    <scope>FUNCTION</scope>
    <scope>DISRUPTION PHENOTYPE</scope>
    <scope>SUBCELLULAR LOCATION</scope>
    <scope>TISSUE SPECIFICITY</scope>
    <scope>INTERACTION WITH CLATHRIN; VTI11; VSR1 AND GAMMA-ADR</scope>
</reference>
<reference key="7">
    <citation type="journal article" date="2009" name="Plant Physiol.">
        <title>Large-scale Arabidopsis phosphoproteome profiling reveals novel chloroplast kinase substrates and phosphorylation networks.</title>
        <authorList>
            <person name="Reiland S."/>
            <person name="Messerli G."/>
            <person name="Baerenfaller K."/>
            <person name="Gerrits B."/>
            <person name="Endler A."/>
            <person name="Grossmann J."/>
            <person name="Gruissem W."/>
            <person name="Baginsky S."/>
        </authorList>
    </citation>
    <scope>IDENTIFICATION BY MASS SPECTROMETRY [LARGE SCALE ANALYSIS]</scope>
</reference>
<reference key="8">
    <citation type="journal article" date="2010" name="Plant Cell">
        <title>The deubiquitinating enzyme AMSH3 is required for intracellular trafficking and vacuole biogenesis in Arabidopsis thaliana.</title>
        <authorList>
            <person name="Isono E."/>
            <person name="Katsiarimpa A."/>
            <person name="Mueller I.K."/>
            <person name="Anzenberger F."/>
            <person name="Stierhof Y.-D."/>
            <person name="Geldner N."/>
            <person name="Chory J."/>
            <person name="Schwechheimer C."/>
        </authorList>
    </citation>
    <scope>INTERACTION WITH AMSH3</scope>
</reference>